<comment type="subcellular location">
    <subcellularLocation>
        <location evidence="1">Cell inner membrane</location>
        <topology evidence="1">Multi-pass membrane protein</topology>
    </subcellularLocation>
</comment>
<comment type="similarity">
    <text evidence="3">Belongs to the UPF0056 (MarC) family.</text>
</comment>
<name>MARC_SALTI</name>
<dbReference type="EMBL" id="AL513382">
    <property type="protein sequence ID" value="CAD01792.1"/>
    <property type="molecule type" value="Genomic_DNA"/>
</dbReference>
<dbReference type="EMBL" id="AE014613">
    <property type="protein sequence ID" value="AAO69084.1"/>
    <property type="molecule type" value="Genomic_DNA"/>
</dbReference>
<dbReference type="RefSeq" id="NP_455959.1">
    <property type="nucleotide sequence ID" value="NC_003198.1"/>
</dbReference>
<dbReference type="RefSeq" id="WP_000968968.1">
    <property type="nucleotide sequence ID" value="NZ_WSUR01000006.1"/>
</dbReference>
<dbReference type="STRING" id="220341.gene:17585482"/>
<dbReference type="KEGG" id="stt:t1442"/>
<dbReference type="KEGG" id="sty:STY1539"/>
<dbReference type="PATRIC" id="fig|220341.7.peg.1548"/>
<dbReference type="eggNOG" id="COG2095">
    <property type="taxonomic scope" value="Bacteria"/>
</dbReference>
<dbReference type="HOGENOM" id="CLU_079909_2_0_6"/>
<dbReference type="OMA" id="MLIMIDP"/>
<dbReference type="OrthoDB" id="21094at2"/>
<dbReference type="Proteomes" id="UP000000541">
    <property type="component" value="Chromosome"/>
</dbReference>
<dbReference type="Proteomes" id="UP000002670">
    <property type="component" value="Chromosome"/>
</dbReference>
<dbReference type="GO" id="GO:0005886">
    <property type="term" value="C:plasma membrane"/>
    <property type="evidence" value="ECO:0007669"/>
    <property type="project" value="UniProtKB-SubCell"/>
</dbReference>
<dbReference type="InterPro" id="IPR002771">
    <property type="entry name" value="Multi_antbiot-R_MarC"/>
</dbReference>
<dbReference type="NCBIfam" id="TIGR00427">
    <property type="entry name" value="NAAT family transporter"/>
    <property type="match status" value="1"/>
</dbReference>
<dbReference type="NCBIfam" id="NF008228">
    <property type="entry name" value="PRK10995.1"/>
    <property type="match status" value="1"/>
</dbReference>
<dbReference type="PANTHER" id="PTHR33508:SF2">
    <property type="entry name" value="UPF0056 INNER MEMBRANE PROTEIN MARC"/>
    <property type="match status" value="1"/>
</dbReference>
<dbReference type="PANTHER" id="PTHR33508">
    <property type="entry name" value="UPF0056 MEMBRANE PROTEIN YHCE"/>
    <property type="match status" value="1"/>
</dbReference>
<dbReference type="Pfam" id="PF01914">
    <property type="entry name" value="MarC"/>
    <property type="match status" value="1"/>
</dbReference>
<feature type="chain" id="PRO_0000156898" description="UPF0056 inner membrane protein MarC">
    <location>
        <begin position="1"/>
        <end position="221"/>
    </location>
</feature>
<feature type="topological domain" description="Periplasmic" evidence="2">
    <location>
        <begin position="1"/>
        <end position="7"/>
    </location>
</feature>
<feature type="transmembrane region" description="Helical" evidence="2">
    <location>
        <begin position="8"/>
        <end position="28"/>
    </location>
</feature>
<feature type="topological domain" description="Cytoplasmic" evidence="2">
    <location>
        <begin position="29"/>
        <end position="45"/>
    </location>
</feature>
<feature type="transmembrane region" description="Helical" evidence="2">
    <location>
        <begin position="46"/>
        <end position="66"/>
    </location>
</feature>
<feature type="topological domain" description="Periplasmic" evidence="2">
    <location>
        <begin position="67"/>
        <end position="68"/>
    </location>
</feature>
<feature type="transmembrane region" description="Helical" evidence="2">
    <location>
        <begin position="69"/>
        <end position="89"/>
    </location>
</feature>
<feature type="topological domain" description="Cytoplasmic" evidence="2">
    <location>
        <begin position="90"/>
        <end position="118"/>
    </location>
</feature>
<feature type="transmembrane region" description="Helical" evidence="2">
    <location>
        <begin position="119"/>
        <end position="139"/>
    </location>
</feature>
<feature type="topological domain" description="Periplasmic" evidence="2">
    <location>
        <begin position="140"/>
        <end position="154"/>
    </location>
</feature>
<feature type="transmembrane region" description="Helical" evidence="2">
    <location>
        <begin position="155"/>
        <end position="175"/>
    </location>
</feature>
<feature type="topological domain" description="Cytoplasmic" evidence="2">
    <location>
        <begin position="176"/>
        <end position="196"/>
    </location>
</feature>
<feature type="transmembrane region" description="Helical" evidence="2">
    <location>
        <begin position="197"/>
        <end position="217"/>
    </location>
</feature>
<feature type="topological domain" description="Periplasmic" evidence="2">
    <location>
        <begin position="218"/>
        <end position="221"/>
    </location>
</feature>
<proteinExistence type="inferred from homology"/>
<organism>
    <name type="scientific">Salmonella typhi</name>
    <dbReference type="NCBI Taxonomy" id="90370"/>
    <lineage>
        <taxon>Bacteria</taxon>
        <taxon>Pseudomonadati</taxon>
        <taxon>Pseudomonadota</taxon>
        <taxon>Gammaproteobacteria</taxon>
        <taxon>Enterobacterales</taxon>
        <taxon>Enterobacteriaceae</taxon>
        <taxon>Salmonella</taxon>
    </lineage>
</organism>
<accession>P0A2L6</accession>
<accession>Q56068</accession>
<gene>
    <name type="primary">marC</name>
    <name type="ordered locus">STY1539</name>
    <name type="ordered locus">t1442</name>
</gene>
<keyword id="KW-0997">Cell inner membrane</keyword>
<keyword id="KW-1003">Cell membrane</keyword>
<keyword id="KW-0472">Membrane</keyword>
<keyword id="KW-0812">Transmembrane</keyword>
<keyword id="KW-1133">Transmembrane helix</keyword>
<sequence length="221" mass="23607">MMDLFKAIGLGLVVLLPLANPLTTVALFLGLAGNMNSAERNRQSYMASVYVFAIMMVAYYAGQLVMNTFGISIPGLRIAGGLIVAFIGFRMLFPQQKAHESPEAKSKSEELADEPTANIAFVPLAMPSTAGPGTIAMIISSASTVRHGGEFPDWVIMVAPPIIFLAVAVILWGCLRSSGAIMRLVGKGGIEAISRLMGFLLVCMGVQFIINGVLEIIKTYH</sequence>
<protein>
    <recommendedName>
        <fullName>UPF0056 inner membrane protein MarC</fullName>
    </recommendedName>
</protein>
<reference key="1">
    <citation type="journal article" date="2001" name="Nature">
        <title>Complete genome sequence of a multiple drug resistant Salmonella enterica serovar Typhi CT18.</title>
        <authorList>
            <person name="Parkhill J."/>
            <person name="Dougan G."/>
            <person name="James K.D."/>
            <person name="Thomson N.R."/>
            <person name="Pickard D."/>
            <person name="Wain J."/>
            <person name="Churcher C.M."/>
            <person name="Mungall K.L."/>
            <person name="Bentley S.D."/>
            <person name="Holden M.T.G."/>
            <person name="Sebaihia M."/>
            <person name="Baker S."/>
            <person name="Basham D."/>
            <person name="Brooks K."/>
            <person name="Chillingworth T."/>
            <person name="Connerton P."/>
            <person name="Cronin A."/>
            <person name="Davis P."/>
            <person name="Davies R.M."/>
            <person name="Dowd L."/>
            <person name="White N."/>
            <person name="Farrar J."/>
            <person name="Feltwell T."/>
            <person name="Hamlin N."/>
            <person name="Haque A."/>
            <person name="Hien T.T."/>
            <person name="Holroyd S."/>
            <person name="Jagels K."/>
            <person name="Krogh A."/>
            <person name="Larsen T.S."/>
            <person name="Leather S."/>
            <person name="Moule S."/>
            <person name="O'Gaora P."/>
            <person name="Parry C."/>
            <person name="Quail M.A."/>
            <person name="Rutherford K.M."/>
            <person name="Simmonds M."/>
            <person name="Skelton J."/>
            <person name="Stevens K."/>
            <person name="Whitehead S."/>
            <person name="Barrell B.G."/>
        </authorList>
    </citation>
    <scope>NUCLEOTIDE SEQUENCE [LARGE SCALE GENOMIC DNA]</scope>
    <source>
        <strain>CT18</strain>
    </source>
</reference>
<reference key="2">
    <citation type="journal article" date="2003" name="J. Bacteriol.">
        <title>Comparative genomics of Salmonella enterica serovar Typhi strains Ty2 and CT18.</title>
        <authorList>
            <person name="Deng W."/>
            <person name="Liou S.-R."/>
            <person name="Plunkett G. III"/>
            <person name="Mayhew G.F."/>
            <person name="Rose D.J."/>
            <person name="Burland V."/>
            <person name="Kodoyianni V."/>
            <person name="Schwartz D.C."/>
            <person name="Blattner F.R."/>
        </authorList>
    </citation>
    <scope>NUCLEOTIDE SEQUENCE [LARGE SCALE GENOMIC DNA]</scope>
    <source>
        <strain>ATCC 700931 / Ty2</strain>
    </source>
</reference>
<evidence type="ECO:0000250" key="1"/>
<evidence type="ECO:0000255" key="2"/>
<evidence type="ECO:0000305" key="3"/>